<keyword id="KW-0378">Hydrolase</keyword>
<keyword id="KW-0472">Membrane</keyword>
<keyword id="KW-0496">Mitochondrion</keyword>
<keyword id="KW-0999">Mitochondrion inner membrane</keyword>
<keyword id="KW-1185">Reference proteome</keyword>
<name>IMP2_ARATH</name>
<feature type="chain" id="PRO_0000457995" description="Mitochondrial ATP-independent inner membrane protease subunit 2">
    <location>
        <begin position="1"/>
        <end position="205"/>
    </location>
</feature>
<feature type="active site" evidence="2">
    <location>
        <position position="59"/>
    </location>
</feature>
<feature type="active site" evidence="2">
    <location>
        <position position="104"/>
    </location>
</feature>
<gene>
    <name evidence="5" type="primary">IMP1B</name>
    <name evidence="7" type="ordered locus">At2g31140</name>
    <name evidence="8" type="ORF">T16B12.5</name>
</gene>
<sequence>MASISTWFRYMAHKLEYSLTLSLKSHRSNKLSDRELIQIICKNLFYGKITYLHSDKGPEMSPTMTANENTLLIRKIPIANTRFVFIGDAVVLKDPNDSDKYLVRRLAAVEGFEMVSGDEKEEPFVLEKNQCWVTAENQELKAKEAYDSRTFGPVSTADIVGRAIYCLRTAVDHGPVRNSQTAMGQDSPILAVELDVDEMAKNHKA</sequence>
<evidence type="ECO:0000250" key="1">
    <source>
        <dbReference type="UniProtKB" id="P28627"/>
    </source>
</evidence>
<evidence type="ECO:0000250" key="2">
    <source>
        <dbReference type="UniProtKB" id="P28628"/>
    </source>
</evidence>
<evidence type="ECO:0000250" key="3">
    <source>
        <dbReference type="UniProtKB" id="Q96LU5"/>
    </source>
</evidence>
<evidence type="ECO:0000269" key="4">
    <source>
    </source>
</evidence>
<evidence type="ECO:0000303" key="5">
    <source>
    </source>
</evidence>
<evidence type="ECO:0000305" key="6"/>
<evidence type="ECO:0000312" key="7">
    <source>
        <dbReference type="Araport" id="AT2G31140"/>
    </source>
</evidence>
<evidence type="ECO:0000312" key="8">
    <source>
        <dbReference type="EMBL" id="AAC63837.1"/>
    </source>
</evidence>
<protein>
    <recommendedName>
        <fullName evidence="5">Mitochondrial ATP-independent inner membrane protease subunit 2</fullName>
        <shortName evidence="5">AtIMP2</shortName>
        <ecNumber evidence="3">3.4.21.-</ecNumber>
    </recommendedName>
</protein>
<organism>
    <name type="scientific">Arabidopsis thaliana</name>
    <name type="common">Mouse-ear cress</name>
    <dbReference type="NCBI Taxonomy" id="3702"/>
    <lineage>
        <taxon>Eukaryota</taxon>
        <taxon>Viridiplantae</taxon>
        <taxon>Streptophyta</taxon>
        <taxon>Embryophyta</taxon>
        <taxon>Tracheophyta</taxon>
        <taxon>Spermatophyta</taxon>
        <taxon>Magnoliopsida</taxon>
        <taxon>eudicotyledons</taxon>
        <taxon>Gunneridae</taxon>
        <taxon>Pentapetalae</taxon>
        <taxon>rosids</taxon>
        <taxon>malvids</taxon>
        <taxon>Brassicales</taxon>
        <taxon>Brassicaceae</taxon>
        <taxon>Camelineae</taxon>
        <taxon>Arabidopsis</taxon>
    </lineage>
</organism>
<proteinExistence type="evidence at transcript level"/>
<dbReference type="EC" id="3.4.21.-" evidence="3"/>
<dbReference type="EMBL" id="AC005311">
    <property type="protein sequence ID" value="AAC63837.1"/>
    <property type="status" value="ALT_SEQ"/>
    <property type="molecule type" value="Genomic_DNA"/>
</dbReference>
<dbReference type="EMBL" id="CP002685">
    <property type="protein sequence ID" value="AEC08497.1"/>
    <property type="molecule type" value="Genomic_DNA"/>
</dbReference>
<dbReference type="EMBL" id="BT004587">
    <property type="protein sequence ID" value="AAO42833.1"/>
    <property type="molecule type" value="mRNA"/>
</dbReference>
<dbReference type="EMBL" id="AK227515">
    <property type="protein sequence ID" value="BAE99515.1"/>
    <property type="molecule type" value="mRNA"/>
</dbReference>
<dbReference type="PIR" id="A84717">
    <property type="entry name" value="A84717"/>
</dbReference>
<dbReference type="RefSeq" id="NP_180672.2">
    <property type="nucleotide sequence ID" value="NM_128670.5"/>
</dbReference>
<dbReference type="SMR" id="Q84VZ6"/>
<dbReference type="FunCoup" id="Q84VZ6">
    <property type="interactions" value="1466"/>
</dbReference>
<dbReference type="STRING" id="3702.Q84VZ6"/>
<dbReference type="iPTMnet" id="Q84VZ6"/>
<dbReference type="SwissPalm" id="Q84VZ6"/>
<dbReference type="PaxDb" id="3702-AT2G31140.1"/>
<dbReference type="ProteomicsDB" id="185101"/>
<dbReference type="EnsemblPlants" id="AT2G31140.1">
    <property type="protein sequence ID" value="AT2G31140.1"/>
    <property type="gene ID" value="AT2G31140"/>
</dbReference>
<dbReference type="GeneID" id="817670"/>
<dbReference type="Gramene" id="AT2G31140.1">
    <property type="protein sequence ID" value="AT2G31140.1"/>
    <property type="gene ID" value="AT2G31140"/>
</dbReference>
<dbReference type="KEGG" id="ath:AT2G31140"/>
<dbReference type="Araport" id="AT2G31140"/>
<dbReference type="TAIR" id="AT2G31140">
    <property type="gene designation" value="ATIMP2"/>
</dbReference>
<dbReference type="eggNOG" id="KOG1568">
    <property type="taxonomic scope" value="Eukaryota"/>
</dbReference>
<dbReference type="HOGENOM" id="CLU_116023_0_0_1"/>
<dbReference type="InParanoid" id="Q84VZ6"/>
<dbReference type="OMA" id="MARNHKA"/>
<dbReference type="OrthoDB" id="308440at2759"/>
<dbReference type="PRO" id="PR:Q84VZ6"/>
<dbReference type="Proteomes" id="UP000006548">
    <property type="component" value="Chromosome 2"/>
</dbReference>
<dbReference type="ExpressionAtlas" id="Q84VZ6">
    <property type="expression patterns" value="baseline and differential"/>
</dbReference>
<dbReference type="GO" id="GO:0005743">
    <property type="term" value="C:mitochondrial inner membrane"/>
    <property type="evidence" value="ECO:0007669"/>
    <property type="project" value="UniProtKB-SubCell"/>
</dbReference>
<dbReference type="GO" id="GO:0005739">
    <property type="term" value="C:mitochondrion"/>
    <property type="evidence" value="ECO:0000314"/>
    <property type="project" value="UniProtKB"/>
</dbReference>
<dbReference type="GO" id="GO:0000325">
    <property type="term" value="C:plant-type vacuole"/>
    <property type="evidence" value="ECO:0007005"/>
    <property type="project" value="TAIR"/>
</dbReference>
<dbReference type="GO" id="GO:0004252">
    <property type="term" value="F:serine-type endopeptidase activity"/>
    <property type="evidence" value="ECO:0007669"/>
    <property type="project" value="InterPro"/>
</dbReference>
<dbReference type="GO" id="GO:0006465">
    <property type="term" value="P:signal peptide processing"/>
    <property type="evidence" value="ECO:0007669"/>
    <property type="project" value="InterPro"/>
</dbReference>
<dbReference type="CDD" id="cd06530">
    <property type="entry name" value="S26_SPase_I"/>
    <property type="match status" value="1"/>
</dbReference>
<dbReference type="FunFam" id="2.10.109.10:FF:000051">
    <property type="entry name" value="Uncharacterized protein At2g31140"/>
    <property type="match status" value="1"/>
</dbReference>
<dbReference type="Gene3D" id="2.10.109.10">
    <property type="entry name" value="Umud Fragment, subunit A"/>
    <property type="match status" value="1"/>
</dbReference>
<dbReference type="InterPro" id="IPR036286">
    <property type="entry name" value="LexA/Signal_pep-like_sf"/>
</dbReference>
<dbReference type="InterPro" id="IPR053307">
    <property type="entry name" value="Mitochondrial_IM_protease"/>
</dbReference>
<dbReference type="InterPro" id="IPR019533">
    <property type="entry name" value="Peptidase_S26"/>
</dbReference>
<dbReference type="PANTHER" id="PTHR47040:SF1">
    <property type="entry name" value="MITOCHONDRIAL ATP-INDEPENDENT INNER MEMBRANE PROTEASE SUBUNIT 2"/>
    <property type="match status" value="1"/>
</dbReference>
<dbReference type="PANTHER" id="PTHR47040">
    <property type="entry name" value="OSJNBA0068L06.9 PROTEIN"/>
    <property type="match status" value="1"/>
</dbReference>
<dbReference type="SUPFAM" id="SSF51306">
    <property type="entry name" value="LexA/Signal peptidase"/>
    <property type="match status" value="1"/>
</dbReference>
<comment type="function">
    <text evidence="3">Catalyzes the removal of transit peptides required for the targeting of proteins from the mitochondrial matrix, across the inner membrane, into the inter-membrane space.</text>
</comment>
<comment type="subunit">
    <text evidence="1">Heterodimer of 2 subunits, IMP1A/B and IMP12.</text>
</comment>
<comment type="subcellular location">
    <subcellularLocation>
        <location evidence="4">Mitochondrion inner membrane</location>
    </subcellularLocation>
</comment>
<comment type="disruption phenotype">
    <text evidence="4">No visible phenotype.</text>
</comment>
<comment type="similarity">
    <text evidence="6">Belongs to the peptidase S26 family. IMP1 subfamily.</text>
</comment>
<comment type="sequence caution" evidence="6">
    <conflict type="erroneous gene model prediction">
        <sequence resource="EMBL-CDS" id="AAC63837"/>
    </conflict>
</comment>
<reference key="1">
    <citation type="journal article" date="1999" name="Nature">
        <title>Sequence and analysis of chromosome 2 of the plant Arabidopsis thaliana.</title>
        <authorList>
            <person name="Lin X."/>
            <person name="Kaul S."/>
            <person name="Rounsley S.D."/>
            <person name="Shea T.P."/>
            <person name="Benito M.-I."/>
            <person name="Town C.D."/>
            <person name="Fujii C.Y."/>
            <person name="Mason T.M."/>
            <person name="Bowman C.L."/>
            <person name="Barnstead M.E."/>
            <person name="Feldblyum T.V."/>
            <person name="Buell C.R."/>
            <person name="Ketchum K.A."/>
            <person name="Lee J.J."/>
            <person name="Ronning C.M."/>
            <person name="Koo H.L."/>
            <person name="Moffat K.S."/>
            <person name="Cronin L.A."/>
            <person name="Shen M."/>
            <person name="Pai G."/>
            <person name="Van Aken S."/>
            <person name="Umayam L."/>
            <person name="Tallon L.J."/>
            <person name="Gill J.E."/>
            <person name="Adams M.D."/>
            <person name="Carrera A.J."/>
            <person name="Creasy T.H."/>
            <person name="Goodman H.M."/>
            <person name="Somerville C.R."/>
            <person name="Copenhaver G.P."/>
            <person name="Preuss D."/>
            <person name="Nierman W.C."/>
            <person name="White O."/>
            <person name="Eisen J.A."/>
            <person name="Salzberg S.L."/>
            <person name="Fraser C.M."/>
            <person name="Venter J.C."/>
        </authorList>
    </citation>
    <scope>NUCLEOTIDE SEQUENCE [LARGE SCALE GENOMIC DNA]</scope>
    <source>
        <strain>cv. Columbia</strain>
    </source>
</reference>
<reference key="2">
    <citation type="journal article" date="2017" name="Plant J.">
        <title>Araport11: a complete reannotation of the Arabidopsis thaliana reference genome.</title>
        <authorList>
            <person name="Cheng C.Y."/>
            <person name="Krishnakumar V."/>
            <person name="Chan A.P."/>
            <person name="Thibaud-Nissen F."/>
            <person name="Schobel S."/>
            <person name="Town C.D."/>
        </authorList>
    </citation>
    <scope>GENOME REANNOTATION</scope>
    <source>
        <strain>cv. Columbia</strain>
    </source>
</reference>
<reference key="3">
    <citation type="journal article" date="2003" name="Science">
        <title>Empirical analysis of transcriptional activity in the Arabidopsis genome.</title>
        <authorList>
            <person name="Yamada K."/>
            <person name="Lim J."/>
            <person name="Dale J.M."/>
            <person name="Chen H."/>
            <person name="Shinn P."/>
            <person name="Palm C.J."/>
            <person name="Southwick A.M."/>
            <person name="Wu H.C."/>
            <person name="Kim C.J."/>
            <person name="Nguyen M."/>
            <person name="Pham P.K."/>
            <person name="Cheuk R.F."/>
            <person name="Karlin-Newmann G."/>
            <person name="Liu S.X."/>
            <person name="Lam B."/>
            <person name="Sakano H."/>
            <person name="Wu T."/>
            <person name="Yu G."/>
            <person name="Miranda M."/>
            <person name="Quach H.L."/>
            <person name="Tripp M."/>
            <person name="Chang C.H."/>
            <person name="Lee J.M."/>
            <person name="Toriumi M.J."/>
            <person name="Chan M.M."/>
            <person name="Tang C.C."/>
            <person name="Onodera C.S."/>
            <person name="Deng J.M."/>
            <person name="Akiyama K."/>
            <person name="Ansari Y."/>
            <person name="Arakawa T."/>
            <person name="Banh J."/>
            <person name="Banno F."/>
            <person name="Bowser L."/>
            <person name="Brooks S.Y."/>
            <person name="Carninci P."/>
            <person name="Chao Q."/>
            <person name="Choy N."/>
            <person name="Enju A."/>
            <person name="Goldsmith A.D."/>
            <person name="Gurjal M."/>
            <person name="Hansen N.F."/>
            <person name="Hayashizaki Y."/>
            <person name="Johnson-Hopson C."/>
            <person name="Hsuan V.W."/>
            <person name="Iida K."/>
            <person name="Karnes M."/>
            <person name="Khan S."/>
            <person name="Koesema E."/>
            <person name="Ishida J."/>
            <person name="Jiang P.X."/>
            <person name="Jones T."/>
            <person name="Kawai J."/>
            <person name="Kamiya A."/>
            <person name="Meyers C."/>
            <person name="Nakajima M."/>
            <person name="Narusaka M."/>
            <person name="Seki M."/>
            <person name="Sakurai T."/>
            <person name="Satou M."/>
            <person name="Tamse R."/>
            <person name="Vaysberg M."/>
            <person name="Wallender E.K."/>
            <person name="Wong C."/>
            <person name="Yamamura Y."/>
            <person name="Yuan S."/>
            <person name="Shinozaki K."/>
            <person name="Davis R.W."/>
            <person name="Theologis A."/>
            <person name="Ecker J.R."/>
        </authorList>
    </citation>
    <scope>NUCLEOTIDE SEQUENCE [LARGE SCALE MRNA]</scope>
    <source>
        <strain>cv. Columbia</strain>
    </source>
</reference>
<reference key="4">
    <citation type="submission" date="2006-07" db="EMBL/GenBank/DDBJ databases">
        <title>Large-scale analysis of RIKEN Arabidopsis full-length (RAFL) cDNAs.</title>
        <authorList>
            <person name="Totoki Y."/>
            <person name="Seki M."/>
            <person name="Ishida J."/>
            <person name="Nakajima M."/>
            <person name="Enju A."/>
            <person name="Kamiya A."/>
            <person name="Narusaka M."/>
            <person name="Shin-i T."/>
            <person name="Nakagawa M."/>
            <person name="Sakamoto N."/>
            <person name="Oishi K."/>
            <person name="Kohara Y."/>
            <person name="Kobayashi M."/>
            <person name="Toyoda A."/>
            <person name="Sakaki Y."/>
            <person name="Sakurai T."/>
            <person name="Iida K."/>
            <person name="Akiyama K."/>
            <person name="Satou M."/>
            <person name="Toyoda T."/>
            <person name="Konagaya A."/>
            <person name="Carninci P."/>
            <person name="Kawai J."/>
            <person name="Hayashizaki Y."/>
            <person name="Shinozaki K."/>
        </authorList>
    </citation>
    <scope>NUCLEOTIDE SEQUENCE [LARGE SCALE MRNA]</scope>
    <source>
        <strain>cv. Columbia</strain>
    </source>
</reference>
<reference key="5">
    <citation type="journal article" date="2012" name="Physiol. Plantarum">
        <title>Proteolytic system of plant mitochondria.</title>
        <authorList>
            <person name="Kwasniak M."/>
            <person name="Pogorzelec L."/>
            <person name="Migdal I."/>
            <person name="Smakowska E."/>
            <person name="Janska H."/>
        </authorList>
    </citation>
    <scope>IDENTIFICATION</scope>
    <scope>REVIEW OF MITOCHONDRIAL PROTEOLYTIC SYSTEM</scope>
</reference>
<reference key="6">
    <citation type="journal article" date="2017" name="Front. Plant Sci.">
        <title>AtOMA1 affects the OXPHOS system and plant growth in contrast to other newly identified ATP-independent proteases in Arabidopsis mitochondria.</title>
        <authorList>
            <person name="Migdal I."/>
            <person name="Skibior-Blaszczyk R."/>
            <person name="Heidorn-Czarna M."/>
            <person name="Kolodziejczak M."/>
            <person name="Garbiec A."/>
            <person name="Janska H."/>
        </authorList>
    </citation>
    <scope>DISRUPTION PHENOTYPE</scope>
    <scope>SUBCELLULAR LOCATION</scope>
    <source>
        <strain>cv. Columbia</strain>
    </source>
</reference>
<accession>Q84VZ6</accession>
<accession>O82270</accession>